<gene>
    <name evidence="1" type="primary">truB</name>
    <name type="ordered locus">TGAM_1972</name>
</gene>
<sequence>MARDEVRRILPADIKREVLIKDEKAETNPKWGFPPERRPMEMHMQFGIINLDKPPGPTSHEVVAWIKKLFNLSKAGHGGTLDPKVSGVLPVALERATRVVQALLPAGKEYVALMHLHGDIPEDKILAVMKEFQGEIIQRPPLRSAVKRRLRTRKVYYIEVLEIEGRDVLFRVGVEAGTYIRSLIHHIGLALGVGAHMAELRRTRSGPFKEDETLVTLHDLVDYYHFWKEDGIEEYFRKAIQPMEKAVEHLPKVWIRDSAVAAVTHGADLAVPGIVKLHKGIKKGDLVAIMTLKDELVALGKAMMTSGEMLQRSKGIAVDVDKVFMPRDWYPRMW</sequence>
<organism>
    <name type="scientific">Thermococcus gammatolerans (strain DSM 15229 / JCM 11827 / EJ3)</name>
    <dbReference type="NCBI Taxonomy" id="593117"/>
    <lineage>
        <taxon>Archaea</taxon>
        <taxon>Methanobacteriati</taxon>
        <taxon>Methanobacteriota</taxon>
        <taxon>Thermococci</taxon>
        <taxon>Thermococcales</taxon>
        <taxon>Thermococcaceae</taxon>
        <taxon>Thermococcus</taxon>
    </lineage>
</organism>
<feature type="chain" id="PRO_1000213510" description="Probable tRNA pseudouridine synthase B">
    <location>
        <begin position="1"/>
        <end position="334"/>
    </location>
</feature>
<feature type="domain" description="PUA" evidence="1">
    <location>
        <begin position="250"/>
        <end position="325"/>
    </location>
</feature>
<feature type="active site" description="Nucleophile" evidence="1">
    <location>
        <position position="82"/>
    </location>
</feature>
<name>TRUB_THEGJ</name>
<protein>
    <recommendedName>
        <fullName evidence="1">Probable tRNA pseudouridine synthase B</fullName>
        <ecNumber evidence="1">5.4.99.25</ecNumber>
    </recommendedName>
    <alternativeName>
        <fullName evidence="1">tRNA pseudouridine(55) synthase</fullName>
        <shortName evidence="1">Psi55 synthase</shortName>
    </alternativeName>
    <alternativeName>
        <fullName evidence="1">tRNA pseudouridylate synthase</fullName>
    </alternativeName>
    <alternativeName>
        <fullName evidence="1">tRNA-uridine isomerase</fullName>
    </alternativeName>
</protein>
<reference key="1">
    <citation type="journal article" date="2007" name="Genome Biol.">
        <title>Genome analysis and genome-wide proteomics of Thermococcus gammatolerans, the most radioresistant organism known amongst the Archaea.</title>
        <authorList>
            <person name="Zivanovic Y."/>
            <person name="Armengaud J."/>
            <person name="Lagorce A."/>
            <person name="Leplat C."/>
            <person name="Guerin P."/>
            <person name="Dutertre M."/>
            <person name="Anthouard V."/>
            <person name="Forterre P."/>
            <person name="Wincker P."/>
            <person name="Confalonieri F."/>
        </authorList>
    </citation>
    <scope>NUCLEOTIDE SEQUENCE [LARGE SCALE GENOMIC DNA]</scope>
    <source>
        <strain>DSM 15229 / JCM 11827 / EJ3</strain>
    </source>
</reference>
<accession>C5A255</accession>
<dbReference type="EC" id="5.4.99.25" evidence="1"/>
<dbReference type="EMBL" id="CP001398">
    <property type="protein sequence ID" value="ACS34474.1"/>
    <property type="molecule type" value="Genomic_DNA"/>
</dbReference>
<dbReference type="RefSeq" id="WP_015859578.1">
    <property type="nucleotide sequence ID" value="NC_012804.1"/>
</dbReference>
<dbReference type="SMR" id="C5A255"/>
<dbReference type="STRING" id="593117.TGAM_1972"/>
<dbReference type="PaxDb" id="593117-TGAM_1972"/>
<dbReference type="GeneID" id="7987029"/>
<dbReference type="KEGG" id="tga:TGAM_1972"/>
<dbReference type="PATRIC" id="fig|593117.10.peg.1982"/>
<dbReference type="eggNOG" id="arCOG00987">
    <property type="taxonomic scope" value="Archaea"/>
</dbReference>
<dbReference type="HOGENOM" id="CLU_032087_3_0_2"/>
<dbReference type="OrthoDB" id="35866at2157"/>
<dbReference type="Proteomes" id="UP000001488">
    <property type="component" value="Chromosome"/>
</dbReference>
<dbReference type="GO" id="GO:0003723">
    <property type="term" value="F:RNA binding"/>
    <property type="evidence" value="ECO:0007669"/>
    <property type="project" value="InterPro"/>
</dbReference>
<dbReference type="GO" id="GO:0160148">
    <property type="term" value="F:tRNA pseudouridine(55) synthase activity"/>
    <property type="evidence" value="ECO:0007669"/>
    <property type="project" value="UniProtKB-EC"/>
</dbReference>
<dbReference type="GO" id="GO:0000495">
    <property type="term" value="P:box H/ACA sno(s)RNA 3'-end processing"/>
    <property type="evidence" value="ECO:0007669"/>
    <property type="project" value="TreeGrafter"/>
</dbReference>
<dbReference type="GO" id="GO:1990481">
    <property type="term" value="P:mRNA pseudouridine synthesis"/>
    <property type="evidence" value="ECO:0007669"/>
    <property type="project" value="TreeGrafter"/>
</dbReference>
<dbReference type="GO" id="GO:0031118">
    <property type="term" value="P:rRNA pseudouridine synthesis"/>
    <property type="evidence" value="ECO:0007669"/>
    <property type="project" value="TreeGrafter"/>
</dbReference>
<dbReference type="GO" id="GO:0031120">
    <property type="term" value="P:snRNA pseudouridine synthesis"/>
    <property type="evidence" value="ECO:0007669"/>
    <property type="project" value="TreeGrafter"/>
</dbReference>
<dbReference type="GO" id="GO:0031119">
    <property type="term" value="P:tRNA pseudouridine synthesis"/>
    <property type="evidence" value="ECO:0007669"/>
    <property type="project" value="UniProtKB-UniRule"/>
</dbReference>
<dbReference type="CDD" id="cd02572">
    <property type="entry name" value="PseudoU_synth_hDyskerin"/>
    <property type="match status" value="1"/>
</dbReference>
<dbReference type="CDD" id="cd21148">
    <property type="entry name" value="PUA_Cbf5"/>
    <property type="match status" value="1"/>
</dbReference>
<dbReference type="FunFam" id="3.30.2350.10:FF:000001">
    <property type="entry name" value="H/ACA ribonucleoprotein complex subunit CBF5"/>
    <property type="match status" value="1"/>
</dbReference>
<dbReference type="FunFam" id="2.30.130.10:FF:000010">
    <property type="entry name" value="Probable tRNA pseudouridine synthase B"/>
    <property type="match status" value="1"/>
</dbReference>
<dbReference type="Gene3D" id="3.30.2350.10">
    <property type="entry name" value="Pseudouridine synthase"/>
    <property type="match status" value="1"/>
</dbReference>
<dbReference type="Gene3D" id="2.30.130.10">
    <property type="entry name" value="PUA domain"/>
    <property type="match status" value="1"/>
</dbReference>
<dbReference type="HAMAP" id="MF_01081">
    <property type="entry name" value="TruB_arch"/>
    <property type="match status" value="1"/>
</dbReference>
<dbReference type="InterPro" id="IPR012960">
    <property type="entry name" value="Dyskerin-like"/>
</dbReference>
<dbReference type="InterPro" id="IPR020103">
    <property type="entry name" value="PsdUridine_synth_cat_dom_sf"/>
</dbReference>
<dbReference type="InterPro" id="IPR002501">
    <property type="entry name" value="PsdUridine_synth_N"/>
</dbReference>
<dbReference type="InterPro" id="IPR002478">
    <property type="entry name" value="PUA"/>
</dbReference>
<dbReference type="InterPro" id="IPR015947">
    <property type="entry name" value="PUA-like_sf"/>
</dbReference>
<dbReference type="InterPro" id="IPR036974">
    <property type="entry name" value="PUA_sf"/>
</dbReference>
<dbReference type="InterPro" id="IPR004802">
    <property type="entry name" value="tRNA_PsdUridine_synth_B_fam"/>
</dbReference>
<dbReference type="InterPro" id="IPR026326">
    <property type="entry name" value="TruB_arch"/>
</dbReference>
<dbReference type="InterPro" id="IPR032819">
    <property type="entry name" value="TruB_C"/>
</dbReference>
<dbReference type="InterPro" id="IPR004521">
    <property type="entry name" value="Uncharacterised_CHP00451"/>
</dbReference>
<dbReference type="NCBIfam" id="TIGR00425">
    <property type="entry name" value="CBF5"/>
    <property type="match status" value="1"/>
</dbReference>
<dbReference type="NCBIfam" id="NF003280">
    <property type="entry name" value="PRK04270.1"/>
    <property type="match status" value="1"/>
</dbReference>
<dbReference type="NCBIfam" id="TIGR00451">
    <property type="entry name" value="unchar_dom_2"/>
    <property type="match status" value="1"/>
</dbReference>
<dbReference type="PANTHER" id="PTHR23127">
    <property type="entry name" value="CENTROMERE/MICROTUBULE BINDING PROTEIN CBF5"/>
    <property type="match status" value="1"/>
</dbReference>
<dbReference type="PANTHER" id="PTHR23127:SF0">
    <property type="entry name" value="H_ACA RIBONUCLEOPROTEIN COMPLEX SUBUNIT DKC1"/>
    <property type="match status" value="1"/>
</dbReference>
<dbReference type="Pfam" id="PF08068">
    <property type="entry name" value="DKCLD"/>
    <property type="match status" value="1"/>
</dbReference>
<dbReference type="Pfam" id="PF01472">
    <property type="entry name" value="PUA"/>
    <property type="match status" value="1"/>
</dbReference>
<dbReference type="Pfam" id="PF16198">
    <property type="entry name" value="TruB_C_2"/>
    <property type="match status" value="1"/>
</dbReference>
<dbReference type="Pfam" id="PF01509">
    <property type="entry name" value="TruB_N"/>
    <property type="match status" value="1"/>
</dbReference>
<dbReference type="SMART" id="SM01136">
    <property type="entry name" value="DKCLD"/>
    <property type="match status" value="1"/>
</dbReference>
<dbReference type="SMART" id="SM00359">
    <property type="entry name" value="PUA"/>
    <property type="match status" value="1"/>
</dbReference>
<dbReference type="SUPFAM" id="SSF55120">
    <property type="entry name" value="Pseudouridine synthase"/>
    <property type="match status" value="1"/>
</dbReference>
<dbReference type="SUPFAM" id="SSF88697">
    <property type="entry name" value="PUA domain-like"/>
    <property type="match status" value="1"/>
</dbReference>
<dbReference type="PROSITE" id="PS50890">
    <property type="entry name" value="PUA"/>
    <property type="match status" value="1"/>
</dbReference>
<comment type="function">
    <text evidence="1">Could be responsible for synthesis of pseudouridine from uracil-55 in the psi GC loop of transfer RNAs.</text>
</comment>
<comment type="catalytic activity">
    <reaction evidence="1">
        <text>uridine(55) in tRNA = pseudouridine(55) in tRNA</text>
        <dbReference type="Rhea" id="RHEA:42532"/>
        <dbReference type="Rhea" id="RHEA-COMP:10101"/>
        <dbReference type="Rhea" id="RHEA-COMP:10102"/>
        <dbReference type="ChEBI" id="CHEBI:65314"/>
        <dbReference type="ChEBI" id="CHEBI:65315"/>
        <dbReference type="EC" id="5.4.99.25"/>
    </reaction>
</comment>
<comment type="similarity">
    <text evidence="1">Belongs to the pseudouridine synthase TruB family. Type 2 subfamily.</text>
</comment>
<proteinExistence type="inferred from homology"/>
<keyword id="KW-0413">Isomerase</keyword>
<keyword id="KW-1185">Reference proteome</keyword>
<keyword id="KW-0819">tRNA processing</keyword>
<evidence type="ECO:0000255" key="1">
    <source>
        <dbReference type="HAMAP-Rule" id="MF_01081"/>
    </source>
</evidence>